<gene>
    <name type="primary">nirF</name>
</gene>
<protein>
    <recommendedName>
        <fullName>Protein NirF</fullName>
    </recommendedName>
</protein>
<proteinExistence type="predicted"/>
<organism>
    <name type="scientific">Stutzerimonas stutzeri</name>
    <name type="common">Pseudomonas stutzeri</name>
    <dbReference type="NCBI Taxonomy" id="316"/>
    <lineage>
        <taxon>Bacteria</taxon>
        <taxon>Pseudomonadati</taxon>
        <taxon>Pseudomonadota</taxon>
        <taxon>Gammaproteobacteria</taxon>
        <taxon>Pseudomonadales</taxon>
        <taxon>Pseudomonadaceae</taxon>
        <taxon>Stutzerimonas</taxon>
    </lineage>
</organism>
<reference key="1">
    <citation type="journal article" date="1995" name="Eur. J. Biochem.">
        <title>Resolution of the nirD locus for heme d1 synthesis of cytochrome cd1 (respiratory nitrite reductase) from Pseudomonas stutzeri.</title>
        <authorList>
            <person name="Palmedo G."/>
            <person name="Seither P."/>
            <person name="Koerner H."/>
            <person name="Matthews J.C."/>
            <person name="Burkhalter R.S."/>
            <person name="Timkovich R."/>
            <person name="Zumft W.G."/>
        </authorList>
    </citation>
    <scope>NUCLEOTIDE SEQUENCE [GENOMIC DNA]</scope>
    <source>
        <strain>ATCC 14405 / JCM 20778 / CIP 107696 / IAM 12931 / LMG 2243 / NCIMB 568 / Baumann 218 / ZoBell 632</strain>
    </source>
</reference>
<reference key="2">
    <citation type="journal article" date="1991" name="FEBS Lett.">
        <title>The nirSTBM region coding for cytochrome cd1-dependent nitrite respiration of Pseudomonas stutzeri consists of a cluster of mono-, di-, and tetraheme proteins.</title>
        <authorList>
            <person name="Juengst A."/>
            <person name="Wakabayashi S."/>
            <person name="Matsubara H."/>
            <person name="Zumft W.G."/>
        </authorList>
    </citation>
    <scope>NUCLEOTIDE SEQUENCE [GENOMIC DNA] OF 1-25</scope>
    <source>
        <strain>ATCC 14405 / JCM 20778 / CIP 107696 / IAM 12931 / LMG 2243 / NCIMB 568 / Baumann 218 / ZoBell 632</strain>
    </source>
</reference>
<keyword id="KW-0963">Cytoplasm</keyword>
<comment type="function">
    <text>Required for the biosynthesis of heme d1 of nitrite reductase. Could have a dehydrogenase activity yielding sirohydrochlorin from precorrin-2 or dehydrogenation of propionate side chain C17.</text>
</comment>
<comment type="subcellular location">
    <subcellularLocation>
        <location>Cytoplasm</location>
    </subcellularLocation>
</comment>
<name>NIRF_STUST</name>
<dbReference type="EMBL" id="X53676">
    <property type="protein sequence ID" value="CAA90578.1"/>
    <property type="molecule type" value="Genomic_DNA"/>
</dbReference>
<dbReference type="PIR" id="S68354">
    <property type="entry name" value="S68354"/>
</dbReference>
<dbReference type="RefSeq" id="WP_003279937.1">
    <property type="nucleotide sequence ID" value="NZ_CP152340.1"/>
</dbReference>
<dbReference type="SMR" id="Q52521"/>
<dbReference type="eggNOG" id="COG3391">
    <property type="taxonomic scope" value="Bacteria"/>
</dbReference>
<dbReference type="GO" id="GO:0005737">
    <property type="term" value="C:cytoplasm"/>
    <property type="evidence" value="ECO:0007669"/>
    <property type="project" value="UniProtKB-SubCell"/>
</dbReference>
<dbReference type="CDD" id="cd20778">
    <property type="entry name" value="8prop_hemeD1_NirF"/>
    <property type="match status" value="1"/>
</dbReference>
<dbReference type="Gene3D" id="2.140.10.20">
    <property type="entry name" value="C-terminal (heme d1) domain of cytochrome cd1-nitrite reductase"/>
    <property type="match status" value="1"/>
</dbReference>
<dbReference type="InterPro" id="IPR003143">
    <property type="entry name" value="Cyt_cd1_C_sf"/>
</dbReference>
<dbReference type="InterPro" id="IPR011048">
    <property type="entry name" value="Haem_d1_sf"/>
</dbReference>
<dbReference type="InterPro" id="IPR051200">
    <property type="entry name" value="Host-pathogen_enzymatic-act"/>
</dbReference>
<dbReference type="PANTHER" id="PTHR47197:SF3">
    <property type="entry name" value="DIHYDRO-HEME D1 DEHYDROGENASE"/>
    <property type="match status" value="1"/>
</dbReference>
<dbReference type="PANTHER" id="PTHR47197">
    <property type="entry name" value="PROTEIN NIRF"/>
    <property type="match status" value="1"/>
</dbReference>
<dbReference type="Pfam" id="PF02239">
    <property type="entry name" value="Cytochrom_D1"/>
    <property type="match status" value="1"/>
</dbReference>
<dbReference type="SUPFAM" id="SSF51004">
    <property type="entry name" value="C-terminal (heme d1) domain of cytochrome cd1-nitrite reductase"/>
    <property type="match status" value="1"/>
</dbReference>
<sequence>MIRPFLLLAAVGLLTACAQQPLRGTGDLGVVVERATGSLQIIESSNQSQIARIEGLGDLSHASVVFSRDQRYAYVFGRDGGLTKVDLLRHRIDRRVIQGGNSIGGAISQDGTLIAVGNYEPGGVKVFDAKTLELVADIPATPLADGSRNARVVGVIDVPGRRFIYSLFDTDETWLLDFSQGNEPQITRFEGIGRQPYDALLTPEGRYYIAGLFGEDGMAKIDLWHPERGVERILDGYGRGEQKLPVYKMPHLEGWTVAGNQTFVPAVGQHRVLVMDSQNWQQTAAIDVAGQPIFVMARPDARQIWVNFAHPDNHRVQVIDSETHEIIADLEPGPAVLHMEFTARGDQLWLSVRDGEEIQVWDPYTLKLLKRLPAHSPSGIFFSSRAHETGL</sequence>
<accession>Q52521</accession>
<feature type="chain" id="PRO_0000096859" description="Protein NirF">
    <location>
        <begin position="1"/>
        <end position="391"/>
    </location>
</feature>